<comment type="function">
    <text evidence="1">Catalyzes the hydrolysis of complex carboxylic polyesters found in the cell wall of plants (By similarity). Degrades cutin, a macromolecule that forms the structure of the plant cuticle (By similarity).</text>
</comment>
<comment type="catalytic activity">
    <reaction evidence="5 6">
        <text>cutin + H2O = cutin monomers.</text>
        <dbReference type="EC" id="3.1.1.74"/>
    </reaction>
</comment>
<comment type="subcellular location">
    <subcellularLocation>
        <location evidence="2">Secreted</location>
    </subcellularLocation>
</comment>
<comment type="similarity">
    <text evidence="7">Belongs to the cutinase family.</text>
</comment>
<protein>
    <recommendedName>
        <fullName>Probable cutinase 2</fullName>
        <ecNumber evidence="5 6">3.1.1.74</ecNumber>
    </recommendedName>
    <alternativeName>
        <fullName>Cutin hydrolase 2</fullName>
    </alternativeName>
</protein>
<evidence type="ECO:0000250" key="1">
    <source>
        <dbReference type="UniProtKB" id="P00590"/>
    </source>
</evidence>
<evidence type="ECO:0000250" key="2">
    <source>
        <dbReference type="UniProtKB" id="P11373"/>
    </source>
</evidence>
<evidence type="ECO:0000250" key="3">
    <source>
        <dbReference type="UniProtKB" id="P52956"/>
    </source>
</evidence>
<evidence type="ECO:0000255" key="4"/>
<evidence type="ECO:0000255" key="5">
    <source>
        <dbReference type="PROSITE-ProRule" id="PRU10108"/>
    </source>
</evidence>
<evidence type="ECO:0000255" key="6">
    <source>
        <dbReference type="PROSITE-ProRule" id="PRU10109"/>
    </source>
</evidence>
<evidence type="ECO:0000305" key="7"/>
<dbReference type="EC" id="3.1.1.74" evidence="5 6"/>
<dbReference type="EMBL" id="AAHF01000005">
    <property type="protein sequence ID" value="EAL89382.1"/>
    <property type="molecule type" value="Genomic_DNA"/>
</dbReference>
<dbReference type="RefSeq" id="XP_751420.1">
    <property type="nucleotide sequence ID" value="XM_746327.1"/>
</dbReference>
<dbReference type="SMR" id="Q4WQV2"/>
<dbReference type="STRING" id="330879.Q4WQV2"/>
<dbReference type="ESTHER" id="aspfu-q4wqv2">
    <property type="family name" value="Cutinase"/>
</dbReference>
<dbReference type="EnsemblFungi" id="EAL89382">
    <property type="protein sequence ID" value="EAL89382"/>
    <property type="gene ID" value="AFUA_4G14120"/>
</dbReference>
<dbReference type="GeneID" id="3508908"/>
<dbReference type="KEGG" id="afm:AFUA_4G14120"/>
<dbReference type="VEuPathDB" id="FungiDB:Afu4g14120"/>
<dbReference type="eggNOG" id="ENOG502SI38">
    <property type="taxonomic scope" value="Eukaryota"/>
</dbReference>
<dbReference type="HOGENOM" id="CLU_040058_2_0_1"/>
<dbReference type="InParanoid" id="Q4WQV2"/>
<dbReference type="OMA" id="ACKPITF"/>
<dbReference type="OrthoDB" id="3225429at2759"/>
<dbReference type="Proteomes" id="UP000002530">
    <property type="component" value="Chromosome 4"/>
</dbReference>
<dbReference type="GO" id="GO:0005576">
    <property type="term" value="C:extracellular region"/>
    <property type="evidence" value="ECO:0007669"/>
    <property type="project" value="UniProtKB-SubCell"/>
</dbReference>
<dbReference type="GO" id="GO:0106435">
    <property type="term" value="F:carboxylesterase activity"/>
    <property type="evidence" value="ECO:0000318"/>
    <property type="project" value="GO_Central"/>
</dbReference>
<dbReference type="GO" id="GO:0050525">
    <property type="term" value="F:cutinase activity"/>
    <property type="evidence" value="ECO:0000250"/>
    <property type="project" value="UniProtKB"/>
</dbReference>
<dbReference type="GO" id="GO:0016298">
    <property type="term" value="F:lipase activity"/>
    <property type="evidence" value="ECO:0000318"/>
    <property type="project" value="GO_Central"/>
</dbReference>
<dbReference type="GO" id="GO:0016042">
    <property type="term" value="P:lipid catabolic process"/>
    <property type="evidence" value="ECO:0000318"/>
    <property type="project" value="GO_Central"/>
</dbReference>
<dbReference type="FunFam" id="3.40.50.1820:FF:000235">
    <property type="entry name" value="Cutinase 1"/>
    <property type="match status" value="1"/>
</dbReference>
<dbReference type="Gene3D" id="3.40.50.1820">
    <property type="entry name" value="alpha/beta hydrolase"/>
    <property type="match status" value="1"/>
</dbReference>
<dbReference type="InterPro" id="IPR029058">
    <property type="entry name" value="AB_hydrolase_fold"/>
</dbReference>
<dbReference type="InterPro" id="IPR000675">
    <property type="entry name" value="Cutinase/axe"/>
</dbReference>
<dbReference type="InterPro" id="IPR043580">
    <property type="entry name" value="CUTINASE_1"/>
</dbReference>
<dbReference type="InterPro" id="IPR043579">
    <property type="entry name" value="CUTINASE_2"/>
</dbReference>
<dbReference type="InterPro" id="IPR011150">
    <property type="entry name" value="Cutinase_monf"/>
</dbReference>
<dbReference type="PANTHER" id="PTHR48250:SF3">
    <property type="entry name" value="CUTINASE 1-RELATED"/>
    <property type="match status" value="1"/>
</dbReference>
<dbReference type="PANTHER" id="PTHR48250">
    <property type="entry name" value="CUTINASE 2-RELATED"/>
    <property type="match status" value="1"/>
</dbReference>
<dbReference type="Pfam" id="PF01083">
    <property type="entry name" value="Cutinase"/>
    <property type="match status" value="1"/>
</dbReference>
<dbReference type="PRINTS" id="PR00129">
    <property type="entry name" value="CUTINASE"/>
</dbReference>
<dbReference type="SMART" id="SM01110">
    <property type="entry name" value="Cutinase"/>
    <property type="match status" value="1"/>
</dbReference>
<dbReference type="SUPFAM" id="SSF53474">
    <property type="entry name" value="alpha/beta-Hydrolases"/>
    <property type="match status" value="1"/>
</dbReference>
<dbReference type="PROSITE" id="PS00155">
    <property type="entry name" value="CUTINASE_1"/>
    <property type="match status" value="1"/>
</dbReference>
<dbReference type="PROSITE" id="PS00931">
    <property type="entry name" value="CUTINASE_2"/>
    <property type="match status" value="1"/>
</dbReference>
<keyword id="KW-1015">Disulfide bond</keyword>
<keyword id="KW-0378">Hydrolase</keyword>
<keyword id="KW-1185">Reference proteome</keyword>
<keyword id="KW-0964">Secreted</keyword>
<keyword id="KW-0719">Serine esterase</keyword>
<keyword id="KW-0732">Signal</keyword>
<reference key="1">
    <citation type="journal article" date="2005" name="Nature">
        <title>Genomic sequence of the pathogenic and allergenic filamentous fungus Aspergillus fumigatus.</title>
        <authorList>
            <person name="Nierman W.C."/>
            <person name="Pain A."/>
            <person name="Anderson M.J."/>
            <person name="Wortman J.R."/>
            <person name="Kim H.S."/>
            <person name="Arroyo J."/>
            <person name="Berriman M."/>
            <person name="Abe K."/>
            <person name="Archer D.B."/>
            <person name="Bermejo C."/>
            <person name="Bennett J.W."/>
            <person name="Bowyer P."/>
            <person name="Chen D."/>
            <person name="Collins M."/>
            <person name="Coulsen R."/>
            <person name="Davies R."/>
            <person name="Dyer P.S."/>
            <person name="Farman M.L."/>
            <person name="Fedorova N."/>
            <person name="Fedorova N.D."/>
            <person name="Feldblyum T.V."/>
            <person name="Fischer R."/>
            <person name="Fosker N."/>
            <person name="Fraser A."/>
            <person name="Garcia J.L."/>
            <person name="Garcia M.J."/>
            <person name="Goble A."/>
            <person name="Goldman G.H."/>
            <person name="Gomi K."/>
            <person name="Griffith-Jones S."/>
            <person name="Gwilliam R."/>
            <person name="Haas B.J."/>
            <person name="Haas H."/>
            <person name="Harris D.E."/>
            <person name="Horiuchi H."/>
            <person name="Huang J."/>
            <person name="Humphray S."/>
            <person name="Jimenez J."/>
            <person name="Keller N."/>
            <person name="Khouri H."/>
            <person name="Kitamoto K."/>
            <person name="Kobayashi T."/>
            <person name="Konzack S."/>
            <person name="Kulkarni R."/>
            <person name="Kumagai T."/>
            <person name="Lafton A."/>
            <person name="Latge J.-P."/>
            <person name="Li W."/>
            <person name="Lord A."/>
            <person name="Lu C."/>
            <person name="Majoros W.H."/>
            <person name="May G.S."/>
            <person name="Miller B.L."/>
            <person name="Mohamoud Y."/>
            <person name="Molina M."/>
            <person name="Monod M."/>
            <person name="Mouyna I."/>
            <person name="Mulligan S."/>
            <person name="Murphy L.D."/>
            <person name="O'Neil S."/>
            <person name="Paulsen I."/>
            <person name="Penalva M.A."/>
            <person name="Pertea M."/>
            <person name="Price C."/>
            <person name="Pritchard B.L."/>
            <person name="Quail M.A."/>
            <person name="Rabbinowitsch E."/>
            <person name="Rawlins N."/>
            <person name="Rajandream M.A."/>
            <person name="Reichard U."/>
            <person name="Renauld H."/>
            <person name="Robson G.D."/>
            <person name="Rodriguez de Cordoba S."/>
            <person name="Rodriguez-Pena J.M."/>
            <person name="Ronning C.M."/>
            <person name="Rutter S."/>
            <person name="Salzberg S.L."/>
            <person name="Sanchez M."/>
            <person name="Sanchez-Ferrero J.C."/>
            <person name="Saunders D."/>
            <person name="Seeger K."/>
            <person name="Squares R."/>
            <person name="Squares S."/>
            <person name="Takeuchi M."/>
            <person name="Tekaia F."/>
            <person name="Turner G."/>
            <person name="Vazquez de Aldana C.R."/>
            <person name="Weidman J."/>
            <person name="White O."/>
            <person name="Woodward J.R."/>
            <person name="Yu J.-H."/>
            <person name="Fraser C.M."/>
            <person name="Galagan J.E."/>
            <person name="Asai K."/>
            <person name="Machida M."/>
            <person name="Hall N."/>
            <person name="Barrell B.G."/>
            <person name="Denning D.W."/>
        </authorList>
    </citation>
    <scope>NUCLEOTIDE SEQUENCE [LARGE SCALE GENOMIC DNA]</scope>
    <source>
        <strain>ATCC MYA-4609 / CBS 101355 / FGSC A1100 / Af293</strain>
    </source>
</reference>
<proteinExistence type="inferred from homology"/>
<name>CUTI2_ASPFU</name>
<accession>Q4WQV2</accession>
<organism>
    <name type="scientific">Aspergillus fumigatus (strain ATCC MYA-4609 / CBS 101355 / FGSC A1100 / Af293)</name>
    <name type="common">Neosartorya fumigata</name>
    <dbReference type="NCBI Taxonomy" id="330879"/>
    <lineage>
        <taxon>Eukaryota</taxon>
        <taxon>Fungi</taxon>
        <taxon>Dikarya</taxon>
        <taxon>Ascomycota</taxon>
        <taxon>Pezizomycotina</taxon>
        <taxon>Eurotiomycetes</taxon>
        <taxon>Eurotiomycetidae</taxon>
        <taxon>Eurotiales</taxon>
        <taxon>Aspergillaceae</taxon>
        <taxon>Aspergillus</taxon>
        <taxon>Aspergillus subgen. Fumigati</taxon>
    </lineage>
</organism>
<feature type="signal peptide" evidence="4">
    <location>
        <begin position="1"/>
        <end position="16"/>
    </location>
</feature>
<feature type="chain" id="PRO_0000233110" description="Probable cutinase 2">
    <location>
        <begin position="17"/>
        <end position="214"/>
    </location>
</feature>
<feature type="active site" description="Nucleophile" evidence="1">
    <location>
        <position position="126"/>
    </location>
</feature>
<feature type="active site" evidence="1">
    <location>
        <position position="181"/>
    </location>
</feature>
<feature type="active site" description="Proton donor/acceptor" evidence="1">
    <location>
        <position position="194"/>
    </location>
</feature>
<feature type="site" description="Transition state stabilizer" evidence="1">
    <location>
        <position position="48"/>
    </location>
</feature>
<feature type="site" description="Transition state stabilizer" evidence="1">
    <location>
        <position position="127"/>
    </location>
</feature>
<feature type="disulfide bond" evidence="3">
    <location>
        <begin position="37"/>
        <end position="115"/>
    </location>
</feature>
<feature type="disulfide bond" evidence="3">
    <location>
        <begin position="63"/>
        <end position="76"/>
    </location>
</feature>
<feature type="disulfide bond" evidence="3">
    <location>
        <begin position="177"/>
        <end position="184"/>
    </location>
</feature>
<sequence length="214" mass="22326">MNLRLLTLALAGLAAASPVAIEERQLSSGNELRNGACKPITFIFARASTEPGLMGLSTGPAVCNSLKAAKPGQVACQGVGPAYTADLASNALPENTSQAAINEAMELFKQAASKCPDTQIVAGGYSQGTAVMDGSIKRLPEEVKERIKGVVLFGYTRNAQERGQIANFPKDKVKIYCAMGDLVCDGTLIVTAAHFTYGANTGDAARFLLGKLTA</sequence>
<gene>
    <name type="ORF">AFUA_4G14120</name>
</gene>